<sequence length="132" mass="14887">MISITEWQKIGVGITGFGIFFILFGTLLYFDSVLLAFGNLLFLTGLSLIIGLRKTFWFFFQRHKLKGTSFLLGGVVIVLLRWPLLGMFLETYGFFSLFKGFFPVAFGFLGNVCNIPFLGALFRRLQGTSSMV</sequence>
<protein>
    <recommendedName>
        <fullName>Vesicle transport protein GOT1A</fullName>
    </recommendedName>
    <alternativeName>
        <fullName>Golgi transport 1 homolog A</fullName>
    </alternativeName>
    <alternativeName>
        <fullName>hGOT1b</fullName>
    </alternativeName>
</protein>
<accession>Q6ZVE7</accession>
<keyword id="KW-0333">Golgi apparatus</keyword>
<keyword id="KW-0472">Membrane</keyword>
<keyword id="KW-0653">Protein transport</keyword>
<keyword id="KW-1267">Proteomics identification</keyword>
<keyword id="KW-1185">Reference proteome</keyword>
<keyword id="KW-0812">Transmembrane</keyword>
<keyword id="KW-1133">Transmembrane helix</keyword>
<keyword id="KW-0813">Transport</keyword>
<reference evidence="6" key="1">
    <citation type="journal article" date="2004" name="Nat. Genet.">
        <title>Complete sequencing and characterization of 21,243 full-length human cDNAs.</title>
        <authorList>
            <person name="Ota T."/>
            <person name="Suzuki Y."/>
            <person name="Nishikawa T."/>
            <person name="Otsuki T."/>
            <person name="Sugiyama T."/>
            <person name="Irie R."/>
            <person name="Wakamatsu A."/>
            <person name="Hayashi K."/>
            <person name="Sato H."/>
            <person name="Nagai K."/>
            <person name="Kimura K."/>
            <person name="Makita H."/>
            <person name="Sekine M."/>
            <person name="Obayashi M."/>
            <person name="Nishi T."/>
            <person name="Shibahara T."/>
            <person name="Tanaka T."/>
            <person name="Ishii S."/>
            <person name="Yamamoto J."/>
            <person name="Saito K."/>
            <person name="Kawai Y."/>
            <person name="Isono Y."/>
            <person name="Nakamura Y."/>
            <person name="Nagahari K."/>
            <person name="Murakami K."/>
            <person name="Yasuda T."/>
            <person name="Iwayanagi T."/>
            <person name="Wagatsuma M."/>
            <person name="Shiratori A."/>
            <person name="Sudo H."/>
            <person name="Hosoiri T."/>
            <person name="Kaku Y."/>
            <person name="Kodaira H."/>
            <person name="Kondo H."/>
            <person name="Sugawara M."/>
            <person name="Takahashi M."/>
            <person name="Kanda K."/>
            <person name="Yokoi T."/>
            <person name="Furuya T."/>
            <person name="Kikkawa E."/>
            <person name="Omura Y."/>
            <person name="Abe K."/>
            <person name="Kamihara K."/>
            <person name="Katsuta N."/>
            <person name="Sato K."/>
            <person name="Tanikawa M."/>
            <person name="Yamazaki M."/>
            <person name="Ninomiya K."/>
            <person name="Ishibashi T."/>
            <person name="Yamashita H."/>
            <person name="Murakawa K."/>
            <person name="Fujimori K."/>
            <person name="Tanai H."/>
            <person name="Kimata M."/>
            <person name="Watanabe M."/>
            <person name="Hiraoka S."/>
            <person name="Chiba Y."/>
            <person name="Ishida S."/>
            <person name="Ono Y."/>
            <person name="Takiguchi S."/>
            <person name="Watanabe S."/>
            <person name="Yosida M."/>
            <person name="Hotuta T."/>
            <person name="Kusano J."/>
            <person name="Kanehori K."/>
            <person name="Takahashi-Fujii A."/>
            <person name="Hara H."/>
            <person name="Tanase T.-O."/>
            <person name="Nomura Y."/>
            <person name="Togiya S."/>
            <person name="Komai F."/>
            <person name="Hara R."/>
            <person name="Takeuchi K."/>
            <person name="Arita M."/>
            <person name="Imose N."/>
            <person name="Musashino K."/>
            <person name="Yuuki H."/>
            <person name="Oshima A."/>
            <person name="Sasaki N."/>
            <person name="Aotsuka S."/>
            <person name="Yoshikawa Y."/>
            <person name="Matsunawa H."/>
            <person name="Ichihara T."/>
            <person name="Shiohata N."/>
            <person name="Sano S."/>
            <person name="Moriya S."/>
            <person name="Momiyama H."/>
            <person name="Satoh N."/>
            <person name="Takami S."/>
            <person name="Terashima Y."/>
            <person name="Suzuki O."/>
            <person name="Nakagawa S."/>
            <person name="Senoh A."/>
            <person name="Mizoguchi H."/>
            <person name="Goto Y."/>
            <person name="Shimizu F."/>
            <person name="Wakebe H."/>
            <person name="Hishigaki H."/>
            <person name="Watanabe T."/>
            <person name="Sugiyama A."/>
            <person name="Takemoto M."/>
            <person name="Kawakami B."/>
            <person name="Yamazaki M."/>
            <person name="Watanabe K."/>
            <person name="Kumagai A."/>
            <person name="Itakura S."/>
            <person name="Fukuzumi Y."/>
            <person name="Fujimori Y."/>
            <person name="Komiyama M."/>
            <person name="Tashiro H."/>
            <person name="Tanigami A."/>
            <person name="Fujiwara T."/>
            <person name="Ono T."/>
            <person name="Yamada K."/>
            <person name="Fujii Y."/>
            <person name="Ozaki K."/>
            <person name="Hirao M."/>
            <person name="Ohmori Y."/>
            <person name="Kawabata A."/>
            <person name="Hikiji T."/>
            <person name="Kobatake N."/>
            <person name="Inagaki H."/>
            <person name="Ikema Y."/>
            <person name="Okamoto S."/>
            <person name="Okitani R."/>
            <person name="Kawakami T."/>
            <person name="Noguchi S."/>
            <person name="Itoh T."/>
            <person name="Shigeta K."/>
            <person name="Senba T."/>
            <person name="Matsumura K."/>
            <person name="Nakajima Y."/>
            <person name="Mizuno T."/>
            <person name="Morinaga M."/>
            <person name="Sasaki M."/>
            <person name="Togashi T."/>
            <person name="Oyama M."/>
            <person name="Hata H."/>
            <person name="Watanabe M."/>
            <person name="Komatsu T."/>
            <person name="Mizushima-Sugano J."/>
            <person name="Satoh T."/>
            <person name="Shirai Y."/>
            <person name="Takahashi Y."/>
            <person name="Nakagawa K."/>
            <person name="Okumura K."/>
            <person name="Nagase T."/>
            <person name="Nomura N."/>
            <person name="Kikuchi H."/>
            <person name="Masuho Y."/>
            <person name="Yamashita R."/>
            <person name="Nakai K."/>
            <person name="Yada T."/>
            <person name="Nakamura Y."/>
            <person name="Ohara O."/>
            <person name="Isogai T."/>
            <person name="Sugano S."/>
        </authorList>
    </citation>
    <scope>NUCLEOTIDE SEQUENCE [LARGE SCALE MRNA]</scope>
    <source>
        <tissue evidence="6">Cerebellum</tissue>
    </source>
</reference>
<reference key="2">
    <citation type="journal article" date="2006" name="Nature">
        <title>The DNA sequence and biological annotation of human chromosome 1.</title>
        <authorList>
            <person name="Gregory S.G."/>
            <person name="Barlow K.F."/>
            <person name="McLay K.E."/>
            <person name="Kaul R."/>
            <person name="Swarbreck D."/>
            <person name="Dunham A."/>
            <person name="Scott C.E."/>
            <person name="Howe K.L."/>
            <person name="Woodfine K."/>
            <person name="Spencer C.C.A."/>
            <person name="Jones M.C."/>
            <person name="Gillson C."/>
            <person name="Searle S."/>
            <person name="Zhou Y."/>
            <person name="Kokocinski F."/>
            <person name="McDonald L."/>
            <person name="Evans R."/>
            <person name="Phillips K."/>
            <person name="Atkinson A."/>
            <person name="Cooper R."/>
            <person name="Jones C."/>
            <person name="Hall R.E."/>
            <person name="Andrews T.D."/>
            <person name="Lloyd C."/>
            <person name="Ainscough R."/>
            <person name="Almeida J.P."/>
            <person name="Ambrose K.D."/>
            <person name="Anderson F."/>
            <person name="Andrew R.W."/>
            <person name="Ashwell R.I.S."/>
            <person name="Aubin K."/>
            <person name="Babbage A.K."/>
            <person name="Bagguley C.L."/>
            <person name="Bailey J."/>
            <person name="Beasley H."/>
            <person name="Bethel G."/>
            <person name="Bird C.P."/>
            <person name="Bray-Allen S."/>
            <person name="Brown J.Y."/>
            <person name="Brown A.J."/>
            <person name="Buckley D."/>
            <person name="Burton J."/>
            <person name="Bye J."/>
            <person name="Carder C."/>
            <person name="Chapman J.C."/>
            <person name="Clark S.Y."/>
            <person name="Clarke G."/>
            <person name="Clee C."/>
            <person name="Cobley V."/>
            <person name="Collier R.E."/>
            <person name="Corby N."/>
            <person name="Coville G.J."/>
            <person name="Davies J."/>
            <person name="Deadman R."/>
            <person name="Dunn M."/>
            <person name="Earthrowl M."/>
            <person name="Ellington A.G."/>
            <person name="Errington H."/>
            <person name="Frankish A."/>
            <person name="Frankland J."/>
            <person name="French L."/>
            <person name="Garner P."/>
            <person name="Garnett J."/>
            <person name="Gay L."/>
            <person name="Ghori M.R.J."/>
            <person name="Gibson R."/>
            <person name="Gilby L.M."/>
            <person name="Gillett W."/>
            <person name="Glithero R.J."/>
            <person name="Grafham D.V."/>
            <person name="Griffiths C."/>
            <person name="Griffiths-Jones S."/>
            <person name="Grocock R."/>
            <person name="Hammond S."/>
            <person name="Harrison E.S.I."/>
            <person name="Hart E."/>
            <person name="Haugen E."/>
            <person name="Heath P.D."/>
            <person name="Holmes S."/>
            <person name="Holt K."/>
            <person name="Howden P.J."/>
            <person name="Hunt A.R."/>
            <person name="Hunt S.E."/>
            <person name="Hunter G."/>
            <person name="Isherwood J."/>
            <person name="James R."/>
            <person name="Johnson C."/>
            <person name="Johnson D."/>
            <person name="Joy A."/>
            <person name="Kay M."/>
            <person name="Kershaw J.K."/>
            <person name="Kibukawa M."/>
            <person name="Kimberley A.M."/>
            <person name="King A."/>
            <person name="Knights A.J."/>
            <person name="Lad H."/>
            <person name="Laird G."/>
            <person name="Lawlor S."/>
            <person name="Leongamornlert D.A."/>
            <person name="Lloyd D.M."/>
            <person name="Loveland J."/>
            <person name="Lovell J."/>
            <person name="Lush M.J."/>
            <person name="Lyne R."/>
            <person name="Martin S."/>
            <person name="Mashreghi-Mohammadi M."/>
            <person name="Matthews L."/>
            <person name="Matthews N.S.W."/>
            <person name="McLaren S."/>
            <person name="Milne S."/>
            <person name="Mistry S."/>
            <person name="Moore M.J.F."/>
            <person name="Nickerson T."/>
            <person name="O'Dell C.N."/>
            <person name="Oliver K."/>
            <person name="Palmeiri A."/>
            <person name="Palmer S.A."/>
            <person name="Parker A."/>
            <person name="Patel D."/>
            <person name="Pearce A.V."/>
            <person name="Peck A.I."/>
            <person name="Pelan S."/>
            <person name="Phelps K."/>
            <person name="Phillimore B.J."/>
            <person name="Plumb R."/>
            <person name="Rajan J."/>
            <person name="Raymond C."/>
            <person name="Rouse G."/>
            <person name="Saenphimmachak C."/>
            <person name="Sehra H.K."/>
            <person name="Sheridan E."/>
            <person name="Shownkeen R."/>
            <person name="Sims S."/>
            <person name="Skuce C.D."/>
            <person name="Smith M."/>
            <person name="Steward C."/>
            <person name="Subramanian S."/>
            <person name="Sycamore N."/>
            <person name="Tracey A."/>
            <person name="Tromans A."/>
            <person name="Van Helmond Z."/>
            <person name="Wall M."/>
            <person name="Wallis J.M."/>
            <person name="White S."/>
            <person name="Whitehead S.L."/>
            <person name="Wilkinson J.E."/>
            <person name="Willey D.L."/>
            <person name="Williams H."/>
            <person name="Wilming L."/>
            <person name="Wray P.W."/>
            <person name="Wu Z."/>
            <person name="Coulson A."/>
            <person name="Vaudin M."/>
            <person name="Sulston J.E."/>
            <person name="Durbin R.M."/>
            <person name="Hubbard T."/>
            <person name="Wooster R."/>
            <person name="Dunham I."/>
            <person name="Carter N.P."/>
            <person name="McVean G."/>
            <person name="Ross M.T."/>
            <person name="Harrow J."/>
            <person name="Olson M.V."/>
            <person name="Beck S."/>
            <person name="Rogers J."/>
            <person name="Bentley D.R."/>
        </authorList>
    </citation>
    <scope>NUCLEOTIDE SEQUENCE [LARGE SCALE GENOMIC DNA]</scope>
</reference>
<reference evidence="5" key="3">
    <citation type="journal article" date="2004" name="Genome Res.">
        <title>The status, quality, and expansion of the NIH full-length cDNA project: the Mammalian Gene Collection (MGC).</title>
        <authorList>
            <consortium name="The MGC Project Team"/>
        </authorList>
    </citation>
    <scope>NUCLEOTIDE SEQUENCE [LARGE SCALE MRNA]</scope>
</reference>
<reference evidence="4" key="4">
    <citation type="journal article" date="1999" name="EMBO J.">
        <title>Got1p and Sft2p: membrane proteins involved in traffic to the Golgi complex.</title>
        <authorList>
            <person name="Conchon S."/>
            <person name="Cao X."/>
            <person name="Barlowe C."/>
            <person name="Pelham H.R."/>
        </authorList>
    </citation>
    <scope>PUTATIVE FUNCTION</scope>
</reference>
<proteinExistence type="evidence at protein level"/>
<feature type="chain" id="PRO_0000237607" description="Vesicle transport protein GOT1A">
    <location>
        <begin position="1"/>
        <end position="132"/>
    </location>
</feature>
<feature type="topological domain" description="Cytoplasmic" evidence="2">
    <location>
        <begin position="1"/>
        <end position="9"/>
    </location>
</feature>
<feature type="transmembrane region" description="Helical; Name=1" evidence="2">
    <location>
        <begin position="10"/>
        <end position="30"/>
    </location>
</feature>
<feature type="topological domain" description="Lumenal" evidence="2">
    <location>
        <position position="31"/>
    </location>
</feature>
<feature type="transmembrane region" description="Helical; Name=2" evidence="2">
    <location>
        <begin position="32"/>
        <end position="52"/>
    </location>
</feature>
<feature type="topological domain" description="Cytoplasmic" evidence="2">
    <location>
        <begin position="53"/>
        <end position="68"/>
    </location>
</feature>
<feature type="transmembrane region" description="Helical; Name=3" evidence="2">
    <location>
        <begin position="69"/>
        <end position="89"/>
    </location>
</feature>
<feature type="topological domain" description="Lumenal" evidence="2">
    <location>
        <begin position="90"/>
        <end position="100"/>
    </location>
</feature>
<feature type="transmembrane region" description="Helical; Name=4" evidence="2">
    <location>
        <begin position="101"/>
        <end position="121"/>
    </location>
</feature>
<feature type="topological domain" description="Cytoplasmic" evidence="2">
    <location>
        <begin position="122"/>
        <end position="132"/>
    </location>
</feature>
<evidence type="ECO:0000250" key="1"/>
<evidence type="ECO:0000255" key="2"/>
<evidence type="ECO:0000269" key="3">
    <source>
    </source>
</evidence>
<evidence type="ECO:0000305" key="4"/>
<evidence type="ECO:0000312" key="5">
    <source>
        <dbReference type="EMBL" id="AAH58832.1"/>
    </source>
</evidence>
<evidence type="ECO:0000312" key="6">
    <source>
        <dbReference type="EMBL" id="BAC85915.1"/>
    </source>
</evidence>
<evidence type="ECO:0000312" key="7">
    <source>
        <dbReference type="HGNC" id="HGNC:24766"/>
    </source>
</evidence>
<gene>
    <name evidence="7" type="primary">GOLT1A</name>
    <name type="synonym">GOT1B</name>
</gene>
<comment type="function">
    <text evidence="3">May be involved in fusion of ER-derived transport vesicles with the Golgi complex.</text>
</comment>
<comment type="interaction">
    <interactant intactId="EBI-17231387">
        <id>Q6ZVE7</id>
    </interactant>
    <interactant intactId="EBI-348517">
        <id>O95870</id>
        <label>ABHD16A</label>
    </interactant>
    <organismsDiffer>false</organismsDiffer>
    <experiments>3</experiments>
</comment>
<comment type="interaction">
    <interactant intactId="EBI-17231387">
        <id>Q6ZVE7</id>
    </interactant>
    <interactant intactId="EBI-2803601">
        <id>Q9NRZ7</id>
        <label>AGPAT3</label>
    </interactant>
    <organismsDiffer>false</organismsDiffer>
    <experiments>3</experiments>
</comment>
<comment type="interaction">
    <interactant intactId="EBI-17231387">
        <id>Q6ZVE7</id>
    </interactant>
    <interactant intactId="EBI-13059134">
        <id>Q13520</id>
        <label>AQP6</label>
    </interactant>
    <organismsDiffer>false</organismsDiffer>
    <experiments>3</experiments>
</comment>
<comment type="interaction">
    <interactant intactId="EBI-17231387">
        <id>Q6ZVE7</id>
    </interactant>
    <interactant intactId="EBI-9021639">
        <id>P07357</id>
        <label>C8A</label>
    </interactant>
    <organismsDiffer>false</organismsDiffer>
    <experiments>3</experiments>
</comment>
<comment type="interaction">
    <interactant intactId="EBI-17231387">
        <id>Q6ZVE7</id>
    </interactant>
    <interactant intactId="EBI-9083477">
        <id>Q9P0B6</id>
        <label>CCDC167</label>
    </interactant>
    <organismsDiffer>false</organismsDiffer>
    <experiments>3</experiments>
</comment>
<comment type="interaction">
    <interactant intactId="EBI-17231387">
        <id>Q6ZVE7</id>
    </interactant>
    <interactant intactId="EBI-11959453">
        <id>Q8NHS1</id>
        <label>CLDND2</label>
    </interactant>
    <organismsDiffer>false</organismsDiffer>
    <experiments>3</experiments>
</comment>
<comment type="interaction">
    <interactant intactId="EBI-17231387">
        <id>Q6ZVE7</id>
    </interactant>
    <interactant intactId="EBI-2834035">
        <id>Q5RI15</id>
        <label>COX20</label>
    </interactant>
    <organismsDiffer>false</organismsDiffer>
    <experiments>3</experiments>
</comment>
<comment type="interaction">
    <interactant intactId="EBI-17231387">
        <id>Q6ZVE7</id>
    </interactant>
    <interactant intactId="EBI-10278486">
        <id>Q92523</id>
        <label>CPT1B</label>
    </interactant>
    <organismsDiffer>false</organismsDiffer>
    <experiments>3</experiments>
</comment>
<comment type="interaction">
    <interactant intactId="EBI-17231387">
        <id>Q6ZVE7</id>
    </interactant>
    <interactant intactId="EBI-12142299">
        <id>Q96IV6</id>
        <label>FAXDC2</label>
    </interactant>
    <organismsDiffer>false</organismsDiffer>
    <experiments>3</experiments>
</comment>
<comment type="interaction">
    <interactant intactId="EBI-17231387">
        <id>Q6ZVE7</id>
    </interactant>
    <interactant intactId="EBI-13345167">
        <id>Q8TDT2</id>
        <label>GPR152</label>
    </interactant>
    <organismsDiffer>false</organismsDiffer>
    <experiments>3</experiments>
</comment>
<comment type="interaction">
    <interactant intactId="EBI-17231387">
        <id>Q6ZVE7</id>
    </interactant>
    <interactant intactId="EBI-702665">
        <id>P02724</id>
        <label>GYPA</label>
    </interactant>
    <organismsDiffer>false</organismsDiffer>
    <experiments>3</experiments>
</comment>
<comment type="interaction">
    <interactant intactId="EBI-17231387">
        <id>Q6ZVE7</id>
    </interactant>
    <interactant intactId="EBI-1052304">
        <id>Q8NBQ5</id>
        <label>HSD17B11</label>
    </interactant>
    <organismsDiffer>false</organismsDiffer>
    <experiments>3</experiments>
</comment>
<comment type="interaction">
    <interactant intactId="EBI-17231387">
        <id>Q6ZVE7</id>
    </interactant>
    <interactant intactId="EBI-12866138">
        <id>A0A0C4DFN3</id>
        <label>MGLL</label>
    </interactant>
    <organismsDiffer>false</organismsDiffer>
    <experiments>3</experiments>
</comment>
<comment type="interaction">
    <interactant intactId="EBI-17231387">
        <id>Q6ZVE7</id>
    </interactant>
    <interactant intactId="EBI-949102">
        <id>Q15800</id>
        <label>MSMO1</label>
    </interactant>
    <organismsDiffer>false</organismsDiffer>
    <experiments>3</experiments>
</comment>
<comment type="interaction">
    <interactant intactId="EBI-17231387">
        <id>Q6ZVE7</id>
    </interactant>
    <interactant intactId="EBI-2863634">
        <id>Q9UHE5</id>
        <label>NAT8</label>
    </interactant>
    <organismsDiffer>false</organismsDiffer>
    <experiments>3</experiments>
</comment>
<comment type="interaction">
    <interactant intactId="EBI-17231387">
        <id>Q6ZVE7</id>
    </interactant>
    <interactant intactId="EBI-1246131">
        <id>O95167</id>
        <label>NDUFA3</label>
    </interactant>
    <organismsDiffer>false</organismsDiffer>
    <experiments>3</experiments>
</comment>
<comment type="interaction">
    <interactant intactId="EBI-17231387">
        <id>Q6ZVE7</id>
    </interactant>
    <interactant intactId="EBI-10262547">
        <id>Q8IXM6</id>
        <label>NRM</label>
    </interactant>
    <organismsDiffer>false</organismsDiffer>
    <experiments>3</experiments>
</comment>
<comment type="interaction">
    <interactant intactId="EBI-17231387">
        <id>Q6ZVE7</id>
    </interactant>
    <interactant intactId="EBI-6916492">
        <id>Q9NUU6</id>
        <label>OTULINL</label>
    </interactant>
    <organismsDiffer>false</organismsDiffer>
    <experiments>3</experiments>
</comment>
<comment type="interaction">
    <interactant intactId="EBI-17231387">
        <id>Q6ZVE7</id>
    </interactant>
    <interactant intactId="EBI-3919291">
        <id>Q9Y342</id>
        <label>PLLP</label>
    </interactant>
    <organismsDiffer>false</organismsDiffer>
    <experiments>3</experiments>
</comment>
<comment type="interaction">
    <interactant intactId="EBI-17231387">
        <id>Q6ZVE7</id>
    </interactant>
    <interactant intactId="EBI-13044680">
        <id>Q9Y225-2</id>
        <label>RNF24</label>
    </interactant>
    <organismsDiffer>false</organismsDiffer>
    <experiments>3</experiments>
</comment>
<comment type="interaction">
    <interactant intactId="EBI-17231387">
        <id>Q6ZVE7</id>
    </interactant>
    <interactant intactId="EBI-8644112">
        <id>Q9BRI3</id>
        <label>SLC30A2</label>
    </interactant>
    <organismsDiffer>false</organismsDiffer>
    <experiments>3</experiments>
</comment>
<comment type="interaction">
    <interactant intactId="EBI-17231387">
        <id>Q6ZVE7</id>
    </interactant>
    <interactant intactId="EBI-17295964">
        <id>Q9NQQ7-3</id>
        <label>SLC35C2</label>
    </interactant>
    <organismsDiffer>false</organismsDiffer>
    <experiments>3</experiments>
</comment>
<comment type="interaction">
    <interactant intactId="EBI-17231387">
        <id>Q6ZVE7</id>
    </interactant>
    <interactant intactId="EBI-2877718">
        <id>Q9NZ01</id>
        <label>TECR</label>
    </interactant>
    <organismsDiffer>false</organismsDiffer>
    <experiments>3</experiments>
</comment>
<comment type="interaction">
    <interactant intactId="EBI-17231387">
        <id>Q6ZVE7</id>
    </interactant>
    <interactant intactId="EBI-1047996">
        <id>O14925</id>
        <label>TIMM23</label>
    </interactant>
    <organismsDiffer>false</organismsDiffer>
    <experiments>3</experiments>
</comment>
<comment type="interaction">
    <interactant intactId="EBI-17231387">
        <id>Q6ZVE7</id>
    </interactant>
    <interactant intactId="EBI-10315004">
        <id>Q9NWH2</id>
        <label>TMEM242</label>
    </interactant>
    <organismsDiffer>false</organismsDiffer>
    <experiments>3</experiments>
</comment>
<comment type="interaction">
    <interactant intactId="EBI-17231387">
        <id>Q6ZVE7</id>
    </interactant>
    <interactant intactId="EBI-988826">
        <id>Q9Y385</id>
        <label>UBE2J1</label>
    </interactant>
    <organismsDiffer>false</organismsDiffer>
    <experiments>3</experiments>
</comment>
<comment type="subcellular location">
    <subcellularLocation>
        <location evidence="1">Golgi apparatus membrane</location>
        <topology evidence="1">Multi-pass membrane protein</topology>
    </subcellularLocation>
</comment>
<comment type="similarity">
    <text evidence="2">Belongs to the GOT1 family.</text>
</comment>
<organism>
    <name type="scientific">Homo sapiens</name>
    <name type="common">Human</name>
    <dbReference type="NCBI Taxonomy" id="9606"/>
    <lineage>
        <taxon>Eukaryota</taxon>
        <taxon>Metazoa</taxon>
        <taxon>Chordata</taxon>
        <taxon>Craniata</taxon>
        <taxon>Vertebrata</taxon>
        <taxon>Euteleostomi</taxon>
        <taxon>Mammalia</taxon>
        <taxon>Eutheria</taxon>
        <taxon>Euarchontoglires</taxon>
        <taxon>Primates</taxon>
        <taxon>Haplorrhini</taxon>
        <taxon>Catarrhini</taxon>
        <taxon>Hominidae</taxon>
        <taxon>Homo</taxon>
    </lineage>
</organism>
<dbReference type="EMBL" id="AK124645">
    <property type="protein sequence ID" value="BAC85915.1"/>
    <property type="molecule type" value="mRNA"/>
</dbReference>
<dbReference type="EMBL" id="AL592114">
    <property type="status" value="NOT_ANNOTATED_CDS"/>
    <property type="molecule type" value="Genomic_DNA"/>
</dbReference>
<dbReference type="EMBL" id="BC058832">
    <property type="protein sequence ID" value="AAH58832.1"/>
    <property type="molecule type" value="mRNA"/>
</dbReference>
<dbReference type="CCDS" id="CCDS1443.1"/>
<dbReference type="RefSeq" id="NP_940849.1">
    <property type="nucleotide sequence ID" value="NM_198447.2"/>
</dbReference>
<dbReference type="BioGRID" id="126087">
    <property type="interactions" value="33"/>
</dbReference>
<dbReference type="FunCoup" id="Q6ZVE7">
    <property type="interactions" value="395"/>
</dbReference>
<dbReference type="IntAct" id="Q6ZVE7">
    <property type="interactions" value="31"/>
</dbReference>
<dbReference type="STRING" id="9606.ENSP00000308535"/>
<dbReference type="BioMuta" id="GOLT1A"/>
<dbReference type="DMDM" id="74749697"/>
<dbReference type="jPOST" id="Q6ZVE7"/>
<dbReference type="MassIVE" id="Q6ZVE7"/>
<dbReference type="PaxDb" id="9606-ENSP00000308535"/>
<dbReference type="PeptideAtlas" id="Q6ZVE7"/>
<dbReference type="ProteomicsDB" id="68412"/>
<dbReference type="Antibodypedia" id="53844">
    <property type="antibodies" value="84 antibodies from 17 providers"/>
</dbReference>
<dbReference type="DNASU" id="127845"/>
<dbReference type="Ensembl" id="ENST00000308302.4">
    <property type="protein sequence ID" value="ENSP00000308535.3"/>
    <property type="gene ID" value="ENSG00000174567.8"/>
</dbReference>
<dbReference type="GeneID" id="127845"/>
<dbReference type="KEGG" id="hsa:127845"/>
<dbReference type="MANE-Select" id="ENST00000308302.4">
    <property type="protein sequence ID" value="ENSP00000308535.3"/>
    <property type="RefSeq nucleotide sequence ID" value="NM_198447.2"/>
    <property type="RefSeq protein sequence ID" value="NP_940849.1"/>
</dbReference>
<dbReference type="UCSC" id="uc001has.1">
    <property type="organism name" value="human"/>
</dbReference>
<dbReference type="AGR" id="HGNC:24766"/>
<dbReference type="CTD" id="127845"/>
<dbReference type="DisGeNET" id="127845"/>
<dbReference type="GeneCards" id="GOLT1A"/>
<dbReference type="HGNC" id="HGNC:24766">
    <property type="gene designation" value="GOLT1A"/>
</dbReference>
<dbReference type="HPA" id="ENSG00000174567">
    <property type="expression patterns" value="Tissue enriched (liver)"/>
</dbReference>
<dbReference type="MIM" id="620633">
    <property type="type" value="gene"/>
</dbReference>
<dbReference type="neXtProt" id="NX_Q6ZVE7"/>
<dbReference type="OpenTargets" id="ENSG00000174567"/>
<dbReference type="PharmGKB" id="PA134874119"/>
<dbReference type="VEuPathDB" id="HostDB:ENSG00000174567"/>
<dbReference type="eggNOG" id="KOG1743">
    <property type="taxonomic scope" value="Eukaryota"/>
</dbReference>
<dbReference type="GeneTree" id="ENSGT00390000014507"/>
<dbReference type="HOGENOM" id="CLU_124519_2_0_1"/>
<dbReference type="InParanoid" id="Q6ZVE7"/>
<dbReference type="OMA" id="FFFQRPK"/>
<dbReference type="OrthoDB" id="204784at2759"/>
<dbReference type="PAN-GO" id="Q6ZVE7">
    <property type="GO annotations" value="2 GO annotations based on evolutionary models"/>
</dbReference>
<dbReference type="PhylomeDB" id="Q6ZVE7"/>
<dbReference type="TreeFam" id="TF300267"/>
<dbReference type="PathwayCommons" id="Q6ZVE7"/>
<dbReference type="SignaLink" id="Q6ZVE7"/>
<dbReference type="BioGRID-ORCS" id="127845">
    <property type="hits" value="8 hits in 1150 CRISPR screens"/>
</dbReference>
<dbReference type="ChiTaRS" id="GOLT1A">
    <property type="organism name" value="human"/>
</dbReference>
<dbReference type="GenomeRNAi" id="127845"/>
<dbReference type="Pharos" id="Q6ZVE7">
    <property type="development level" value="Tdark"/>
</dbReference>
<dbReference type="PRO" id="PR:Q6ZVE7"/>
<dbReference type="Proteomes" id="UP000005640">
    <property type="component" value="Chromosome 1"/>
</dbReference>
<dbReference type="RNAct" id="Q6ZVE7">
    <property type="molecule type" value="protein"/>
</dbReference>
<dbReference type="Bgee" id="ENSG00000174567">
    <property type="expression patterns" value="Expressed in right lobe of liver and 103 other cell types or tissues"/>
</dbReference>
<dbReference type="GO" id="GO:0005829">
    <property type="term" value="C:cytosol"/>
    <property type="evidence" value="ECO:0007669"/>
    <property type="project" value="GOC"/>
</dbReference>
<dbReference type="GO" id="GO:0005783">
    <property type="term" value="C:endoplasmic reticulum"/>
    <property type="evidence" value="ECO:0000314"/>
    <property type="project" value="UniProtKB"/>
</dbReference>
<dbReference type="GO" id="GO:0000137">
    <property type="term" value="C:Golgi cis cisterna"/>
    <property type="evidence" value="ECO:0000314"/>
    <property type="project" value="UniProtKB"/>
</dbReference>
<dbReference type="GO" id="GO:0000139">
    <property type="term" value="C:Golgi membrane"/>
    <property type="evidence" value="ECO:0007669"/>
    <property type="project" value="UniProtKB-SubCell"/>
</dbReference>
<dbReference type="GO" id="GO:0016020">
    <property type="term" value="C:membrane"/>
    <property type="evidence" value="ECO:0000318"/>
    <property type="project" value="GO_Central"/>
</dbReference>
<dbReference type="GO" id="GO:0005635">
    <property type="term" value="C:nuclear envelope"/>
    <property type="evidence" value="ECO:0000314"/>
    <property type="project" value="UniProtKB"/>
</dbReference>
<dbReference type="GO" id="GO:0005802">
    <property type="term" value="C:trans-Golgi network"/>
    <property type="evidence" value="ECO:0000314"/>
    <property type="project" value="UniProtKB"/>
</dbReference>
<dbReference type="GO" id="GO:0006888">
    <property type="term" value="P:endoplasmic reticulum to Golgi vesicle-mediated transport"/>
    <property type="evidence" value="ECO:0000250"/>
    <property type="project" value="UniProtKB"/>
</dbReference>
<dbReference type="GO" id="GO:0015031">
    <property type="term" value="P:protein transport"/>
    <property type="evidence" value="ECO:0007669"/>
    <property type="project" value="UniProtKB-KW"/>
</dbReference>
<dbReference type="GO" id="GO:0042147">
    <property type="term" value="P:retrograde transport, endosome to Golgi"/>
    <property type="evidence" value="ECO:0007669"/>
    <property type="project" value="InterPro"/>
</dbReference>
<dbReference type="InterPro" id="IPR045176">
    <property type="entry name" value="Got1"/>
</dbReference>
<dbReference type="InterPro" id="IPR007305">
    <property type="entry name" value="Vesicle_transpt_Got1/SFT2"/>
</dbReference>
<dbReference type="PANTHER" id="PTHR21493">
    <property type="entry name" value="CGI-141-RELATED/LIPASE CONTAINING PROTEIN"/>
    <property type="match status" value="1"/>
</dbReference>
<dbReference type="PANTHER" id="PTHR21493:SF245">
    <property type="entry name" value="VESICLE TRANSPORT PROTEIN GOT1A"/>
    <property type="match status" value="1"/>
</dbReference>
<dbReference type="Pfam" id="PF04178">
    <property type="entry name" value="Got1"/>
    <property type="match status" value="1"/>
</dbReference>
<name>GOT1A_HUMAN</name>